<sequence length="490" mass="53452">MTERVDPKKLIKGGLHDWEVVIGMEIHAQVTSRSKLFSGASTEFGGEPNDHVSLVDAAMPGMLPVINEECVAQAVRTGLGLKAQINLRSVFDRKNYFYPDLPQGYQISQYKDPIVGEGEVLVDLPEGESITVGIERLHLEQDAGKSLHDQDPTKSFVDLNRSGVALMEIVSRPDLRSSEEARAYVTKLRTILRYLGTCDGDMEKGSLRADVNVSVRRPGEPLGTRCEIKNVNSIRFIGQAIETEARRQIAILEDGGKIDQETRLYDPGKGETRSMRSKEEAHDYRYFPDPDLLPLEFDQAYVDALASGLPELPDAKKARFIKDFGLSAYDAGVLVAERASADYFEAVARGRDGKAAANWVINELFGRLNKEGRSIEDTPVSAEQLGTIVDLIGDGVISGKIAKDLFEIVWSEGGDPRAIVEARGMKQVTDTGAIEAAVDAIIAANPDKVEQAKAKPTLLGWFVGQTMKATGGKANPAAVNALLKDKLGIE</sequence>
<dbReference type="EC" id="6.3.5.-" evidence="1"/>
<dbReference type="EMBL" id="CP001298">
    <property type="protein sequence ID" value="ACK84125.1"/>
    <property type="molecule type" value="Genomic_DNA"/>
</dbReference>
<dbReference type="RefSeq" id="WP_015951442.1">
    <property type="nucleotide sequence ID" value="NC_011757.1"/>
</dbReference>
<dbReference type="SMR" id="B7KTR5"/>
<dbReference type="KEGG" id="mch:Mchl_3288"/>
<dbReference type="HOGENOM" id="CLU_019240_1_1_5"/>
<dbReference type="Proteomes" id="UP000002385">
    <property type="component" value="Chromosome"/>
</dbReference>
<dbReference type="GO" id="GO:0050566">
    <property type="term" value="F:asparaginyl-tRNA synthase (glutamine-hydrolyzing) activity"/>
    <property type="evidence" value="ECO:0007669"/>
    <property type="project" value="RHEA"/>
</dbReference>
<dbReference type="GO" id="GO:0005524">
    <property type="term" value="F:ATP binding"/>
    <property type="evidence" value="ECO:0007669"/>
    <property type="project" value="UniProtKB-KW"/>
</dbReference>
<dbReference type="GO" id="GO:0050567">
    <property type="term" value="F:glutaminyl-tRNA synthase (glutamine-hydrolyzing) activity"/>
    <property type="evidence" value="ECO:0007669"/>
    <property type="project" value="UniProtKB-UniRule"/>
</dbReference>
<dbReference type="GO" id="GO:0070681">
    <property type="term" value="P:glutaminyl-tRNAGln biosynthesis via transamidation"/>
    <property type="evidence" value="ECO:0007669"/>
    <property type="project" value="TreeGrafter"/>
</dbReference>
<dbReference type="GO" id="GO:0006412">
    <property type="term" value="P:translation"/>
    <property type="evidence" value="ECO:0007669"/>
    <property type="project" value="UniProtKB-UniRule"/>
</dbReference>
<dbReference type="FunFam" id="1.10.10.410:FF:000001">
    <property type="entry name" value="Aspartyl/glutamyl-tRNA(Asn/Gln) amidotransferase subunit B"/>
    <property type="match status" value="1"/>
</dbReference>
<dbReference type="FunFam" id="1.10.150.380:FF:000001">
    <property type="entry name" value="Aspartyl/glutamyl-tRNA(Asn/Gln) amidotransferase subunit B"/>
    <property type="match status" value="1"/>
</dbReference>
<dbReference type="Gene3D" id="1.10.10.410">
    <property type="match status" value="1"/>
</dbReference>
<dbReference type="Gene3D" id="1.10.150.380">
    <property type="entry name" value="GatB domain, N-terminal subdomain"/>
    <property type="match status" value="1"/>
</dbReference>
<dbReference type="HAMAP" id="MF_00121">
    <property type="entry name" value="GatB"/>
    <property type="match status" value="1"/>
</dbReference>
<dbReference type="InterPro" id="IPR017959">
    <property type="entry name" value="Asn/Gln-tRNA_amidoTrfase_suB/E"/>
</dbReference>
<dbReference type="InterPro" id="IPR006075">
    <property type="entry name" value="Asn/Gln-tRNA_Trfase_suB/E_cat"/>
</dbReference>
<dbReference type="InterPro" id="IPR018027">
    <property type="entry name" value="Asn/Gln_amidotransferase"/>
</dbReference>
<dbReference type="InterPro" id="IPR003789">
    <property type="entry name" value="Asn/Gln_tRNA_amidoTrase-B-like"/>
</dbReference>
<dbReference type="InterPro" id="IPR004413">
    <property type="entry name" value="GatB"/>
</dbReference>
<dbReference type="InterPro" id="IPR042114">
    <property type="entry name" value="GatB_C_1"/>
</dbReference>
<dbReference type="InterPro" id="IPR023168">
    <property type="entry name" value="GatB_Yqey_C_2"/>
</dbReference>
<dbReference type="InterPro" id="IPR017958">
    <property type="entry name" value="Gln-tRNA_amidoTrfase_suB_CS"/>
</dbReference>
<dbReference type="InterPro" id="IPR014746">
    <property type="entry name" value="Gln_synth/guanido_kin_cat_dom"/>
</dbReference>
<dbReference type="NCBIfam" id="TIGR00133">
    <property type="entry name" value="gatB"/>
    <property type="match status" value="1"/>
</dbReference>
<dbReference type="NCBIfam" id="NF004012">
    <property type="entry name" value="PRK05477.1-2"/>
    <property type="match status" value="1"/>
</dbReference>
<dbReference type="NCBIfam" id="NF004014">
    <property type="entry name" value="PRK05477.1-4"/>
    <property type="match status" value="1"/>
</dbReference>
<dbReference type="NCBIfam" id="NF004015">
    <property type="entry name" value="PRK05477.1-5"/>
    <property type="match status" value="1"/>
</dbReference>
<dbReference type="PANTHER" id="PTHR11659">
    <property type="entry name" value="GLUTAMYL-TRNA GLN AMIDOTRANSFERASE SUBUNIT B MITOCHONDRIAL AND PROKARYOTIC PET112-RELATED"/>
    <property type="match status" value="1"/>
</dbReference>
<dbReference type="PANTHER" id="PTHR11659:SF0">
    <property type="entry name" value="GLUTAMYL-TRNA(GLN) AMIDOTRANSFERASE SUBUNIT B, MITOCHONDRIAL"/>
    <property type="match status" value="1"/>
</dbReference>
<dbReference type="Pfam" id="PF02934">
    <property type="entry name" value="GatB_N"/>
    <property type="match status" value="1"/>
</dbReference>
<dbReference type="Pfam" id="PF02637">
    <property type="entry name" value="GatB_Yqey"/>
    <property type="match status" value="1"/>
</dbReference>
<dbReference type="SMART" id="SM00845">
    <property type="entry name" value="GatB_Yqey"/>
    <property type="match status" value="1"/>
</dbReference>
<dbReference type="SUPFAM" id="SSF89095">
    <property type="entry name" value="GatB/YqeY motif"/>
    <property type="match status" value="1"/>
</dbReference>
<dbReference type="SUPFAM" id="SSF55931">
    <property type="entry name" value="Glutamine synthetase/guanido kinase"/>
    <property type="match status" value="1"/>
</dbReference>
<dbReference type="PROSITE" id="PS01234">
    <property type="entry name" value="GATB"/>
    <property type="match status" value="1"/>
</dbReference>
<proteinExistence type="inferred from homology"/>
<feature type="chain" id="PRO_1000122525" description="Aspartyl/glutamyl-tRNA(Asn/Gln) amidotransferase subunit B">
    <location>
        <begin position="1"/>
        <end position="490"/>
    </location>
</feature>
<keyword id="KW-0067">ATP-binding</keyword>
<keyword id="KW-0436">Ligase</keyword>
<keyword id="KW-0547">Nucleotide-binding</keyword>
<keyword id="KW-0648">Protein biosynthesis</keyword>
<reference key="1">
    <citation type="submission" date="2008-12" db="EMBL/GenBank/DDBJ databases">
        <title>Complete sequence of chromosome of Methylobacterium chloromethanicum CM4.</title>
        <authorList>
            <consortium name="US DOE Joint Genome Institute"/>
            <person name="Lucas S."/>
            <person name="Copeland A."/>
            <person name="Lapidus A."/>
            <person name="Glavina del Rio T."/>
            <person name="Dalin E."/>
            <person name="Tice H."/>
            <person name="Bruce D."/>
            <person name="Goodwin L."/>
            <person name="Pitluck S."/>
            <person name="Chertkov O."/>
            <person name="Brettin T."/>
            <person name="Detter J.C."/>
            <person name="Han C."/>
            <person name="Larimer F."/>
            <person name="Land M."/>
            <person name="Hauser L."/>
            <person name="Kyrpides N."/>
            <person name="Mikhailova N."/>
            <person name="Marx C."/>
            <person name="Richardson P."/>
        </authorList>
    </citation>
    <scope>NUCLEOTIDE SEQUENCE [LARGE SCALE GENOMIC DNA]</scope>
    <source>
        <strain>CM4 / NCIMB 13688</strain>
    </source>
</reference>
<evidence type="ECO:0000255" key="1">
    <source>
        <dbReference type="HAMAP-Rule" id="MF_00121"/>
    </source>
</evidence>
<organism>
    <name type="scientific">Methylorubrum extorquens (strain CM4 / NCIMB 13688)</name>
    <name type="common">Methylobacterium extorquens</name>
    <dbReference type="NCBI Taxonomy" id="440085"/>
    <lineage>
        <taxon>Bacteria</taxon>
        <taxon>Pseudomonadati</taxon>
        <taxon>Pseudomonadota</taxon>
        <taxon>Alphaproteobacteria</taxon>
        <taxon>Hyphomicrobiales</taxon>
        <taxon>Methylobacteriaceae</taxon>
        <taxon>Methylorubrum</taxon>
    </lineage>
</organism>
<comment type="function">
    <text evidence="1">Allows the formation of correctly charged Asn-tRNA(Asn) or Gln-tRNA(Gln) through the transamidation of misacylated Asp-tRNA(Asn) or Glu-tRNA(Gln) in organisms which lack either or both of asparaginyl-tRNA or glutaminyl-tRNA synthetases. The reaction takes place in the presence of glutamine and ATP through an activated phospho-Asp-tRNA(Asn) or phospho-Glu-tRNA(Gln).</text>
</comment>
<comment type="catalytic activity">
    <reaction evidence="1">
        <text>L-glutamyl-tRNA(Gln) + L-glutamine + ATP + H2O = L-glutaminyl-tRNA(Gln) + L-glutamate + ADP + phosphate + H(+)</text>
        <dbReference type="Rhea" id="RHEA:17521"/>
        <dbReference type="Rhea" id="RHEA-COMP:9681"/>
        <dbReference type="Rhea" id="RHEA-COMP:9684"/>
        <dbReference type="ChEBI" id="CHEBI:15377"/>
        <dbReference type="ChEBI" id="CHEBI:15378"/>
        <dbReference type="ChEBI" id="CHEBI:29985"/>
        <dbReference type="ChEBI" id="CHEBI:30616"/>
        <dbReference type="ChEBI" id="CHEBI:43474"/>
        <dbReference type="ChEBI" id="CHEBI:58359"/>
        <dbReference type="ChEBI" id="CHEBI:78520"/>
        <dbReference type="ChEBI" id="CHEBI:78521"/>
        <dbReference type="ChEBI" id="CHEBI:456216"/>
    </reaction>
</comment>
<comment type="catalytic activity">
    <reaction evidence="1">
        <text>L-aspartyl-tRNA(Asn) + L-glutamine + ATP + H2O = L-asparaginyl-tRNA(Asn) + L-glutamate + ADP + phosphate + 2 H(+)</text>
        <dbReference type="Rhea" id="RHEA:14513"/>
        <dbReference type="Rhea" id="RHEA-COMP:9674"/>
        <dbReference type="Rhea" id="RHEA-COMP:9677"/>
        <dbReference type="ChEBI" id="CHEBI:15377"/>
        <dbReference type="ChEBI" id="CHEBI:15378"/>
        <dbReference type="ChEBI" id="CHEBI:29985"/>
        <dbReference type="ChEBI" id="CHEBI:30616"/>
        <dbReference type="ChEBI" id="CHEBI:43474"/>
        <dbReference type="ChEBI" id="CHEBI:58359"/>
        <dbReference type="ChEBI" id="CHEBI:78515"/>
        <dbReference type="ChEBI" id="CHEBI:78516"/>
        <dbReference type="ChEBI" id="CHEBI:456216"/>
    </reaction>
</comment>
<comment type="subunit">
    <text evidence="1">Heterotrimer of A, B and C subunits.</text>
</comment>
<comment type="similarity">
    <text evidence="1">Belongs to the GatB/GatE family. GatB subfamily.</text>
</comment>
<protein>
    <recommendedName>
        <fullName evidence="1">Aspartyl/glutamyl-tRNA(Asn/Gln) amidotransferase subunit B</fullName>
        <shortName evidence="1">Asp/Glu-ADT subunit B</shortName>
        <ecNumber evidence="1">6.3.5.-</ecNumber>
    </recommendedName>
</protein>
<gene>
    <name evidence="1" type="primary">gatB</name>
    <name type="ordered locus">Mchl_3288</name>
</gene>
<name>GATB_METC4</name>
<accession>B7KTR5</accession>